<reference key="1">
    <citation type="journal article" date="2001" name="Proc. Natl. Acad. Sci. U.S.A.">
        <title>Complete genome sequence of Caulobacter crescentus.</title>
        <authorList>
            <person name="Nierman W.C."/>
            <person name="Feldblyum T.V."/>
            <person name="Laub M.T."/>
            <person name="Paulsen I.T."/>
            <person name="Nelson K.E."/>
            <person name="Eisen J.A."/>
            <person name="Heidelberg J.F."/>
            <person name="Alley M.R.K."/>
            <person name="Ohta N."/>
            <person name="Maddock J.R."/>
            <person name="Potocka I."/>
            <person name="Nelson W.C."/>
            <person name="Newton A."/>
            <person name="Stephens C."/>
            <person name="Phadke N.D."/>
            <person name="Ely B."/>
            <person name="DeBoy R.T."/>
            <person name="Dodson R.J."/>
            <person name="Durkin A.S."/>
            <person name="Gwinn M.L."/>
            <person name="Haft D.H."/>
            <person name="Kolonay J.F."/>
            <person name="Smit J."/>
            <person name="Craven M.B."/>
            <person name="Khouri H.M."/>
            <person name="Shetty J."/>
            <person name="Berry K.J."/>
            <person name="Utterback T.R."/>
            <person name="Tran K."/>
            <person name="Wolf A.M."/>
            <person name="Vamathevan J.J."/>
            <person name="Ermolaeva M.D."/>
            <person name="White O."/>
            <person name="Salzberg S.L."/>
            <person name="Venter J.C."/>
            <person name="Shapiro L."/>
            <person name="Fraser C.M."/>
        </authorList>
    </citation>
    <scope>NUCLEOTIDE SEQUENCE [LARGE SCALE GENOMIC DNA]</scope>
    <source>
        <strain>ATCC 19089 / CIP 103742 / CB 15</strain>
    </source>
</reference>
<comment type="function">
    <text evidence="1">FliM is one of three proteins (FliG, FliN, FliM) that forms the rotor-mounted switch complex (C ring), located at the base of the basal body. This complex interacts with the CheY and CheZ chemotaxis proteins, in addition to contacting components of the motor that determine the direction of flagellar rotation (By similarity).</text>
</comment>
<comment type="subcellular location">
    <subcellularLocation>
        <location>Cell inner membrane</location>
        <topology>Peripheral membrane protein</topology>
    </subcellularLocation>
    <subcellularLocation>
        <location evidence="1">Bacterial flagellum basal body</location>
    </subcellularLocation>
</comment>
<comment type="similarity">
    <text evidence="3">Belongs to the FliM family.</text>
</comment>
<comment type="caution">
    <text evidence="3">It is uncertain whether Met-1, Met-11, Val-26 or Met-36 is the initiator.</text>
</comment>
<comment type="caution">
    <text evidence="3">Could be the product of a pseudogene. This locus is annotated as an authentic frame shift in the DNA submission.</text>
</comment>
<comment type="sequence caution" evidence="3">
    <conflict type="frameshift">
        <sequence resource="EMBL" id="AE005673"/>
    </conflict>
</comment>
<dbReference type="EMBL" id="AE005673">
    <property type="status" value="NOT_ANNOTATED_CDS"/>
    <property type="molecule type" value="Genomic_DNA"/>
</dbReference>
<dbReference type="PIR" id="A41875">
    <property type="entry name" value="A41875"/>
</dbReference>
<dbReference type="SMR" id="P0CG26"/>
<dbReference type="Proteomes" id="UP000001816">
    <property type="component" value="Chromosome"/>
</dbReference>
<dbReference type="GO" id="GO:0009425">
    <property type="term" value="C:bacterial-type flagellum basal body"/>
    <property type="evidence" value="ECO:0007669"/>
    <property type="project" value="UniProtKB-SubCell"/>
</dbReference>
<dbReference type="GO" id="GO:0005886">
    <property type="term" value="C:plasma membrane"/>
    <property type="evidence" value="ECO:0007669"/>
    <property type="project" value="UniProtKB-SubCell"/>
</dbReference>
<dbReference type="GO" id="GO:0003774">
    <property type="term" value="F:cytoskeletal motor activity"/>
    <property type="evidence" value="ECO:0007669"/>
    <property type="project" value="InterPro"/>
</dbReference>
<dbReference type="GO" id="GO:0071978">
    <property type="term" value="P:bacterial-type flagellum-dependent swarming motility"/>
    <property type="evidence" value="ECO:0007669"/>
    <property type="project" value="TreeGrafter"/>
</dbReference>
<dbReference type="GO" id="GO:0050918">
    <property type="term" value="P:positive chemotaxis"/>
    <property type="evidence" value="ECO:0007669"/>
    <property type="project" value="TreeGrafter"/>
</dbReference>
<dbReference type="CDD" id="cd17908">
    <property type="entry name" value="FliM"/>
    <property type="match status" value="1"/>
</dbReference>
<dbReference type="Gene3D" id="3.40.1550.10">
    <property type="entry name" value="CheC-like"/>
    <property type="match status" value="1"/>
</dbReference>
<dbReference type="InterPro" id="IPR028976">
    <property type="entry name" value="CheC-like_sf"/>
</dbReference>
<dbReference type="InterPro" id="IPR001689">
    <property type="entry name" value="Flag_FliM"/>
</dbReference>
<dbReference type="InterPro" id="IPR001543">
    <property type="entry name" value="FliN-like_C"/>
</dbReference>
<dbReference type="InterPro" id="IPR036429">
    <property type="entry name" value="SpoA-like_sf"/>
</dbReference>
<dbReference type="NCBIfam" id="TIGR01397">
    <property type="entry name" value="fliM_switch"/>
    <property type="match status" value="1"/>
</dbReference>
<dbReference type="PANTHER" id="PTHR30034">
    <property type="entry name" value="FLAGELLAR MOTOR SWITCH PROTEIN FLIM"/>
    <property type="match status" value="1"/>
</dbReference>
<dbReference type="PANTHER" id="PTHR30034:SF3">
    <property type="entry name" value="FLAGELLAR MOTOR SWITCH PROTEIN FLIM"/>
    <property type="match status" value="1"/>
</dbReference>
<dbReference type="Pfam" id="PF02154">
    <property type="entry name" value="FliM"/>
    <property type="match status" value="1"/>
</dbReference>
<dbReference type="Pfam" id="PF01052">
    <property type="entry name" value="FliMN_C"/>
    <property type="match status" value="1"/>
</dbReference>
<dbReference type="PIRSF" id="PIRSF002888">
    <property type="entry name" value="FliM"/>
    <property type="match status" value="1"/>
</dbReference>
<dbReference type="PRINTS" id="PR00955">
    <property type="entry name" value="FLGMOTORFLIM"/>
</dbReference>
<dbReference type="SUPFAM" id="SSF103039">
    <property type="entry name" value="CheC-like"/>
    <property type="match status" value="1"/>
</dbReference>
<dbReference type="SUPFAM" id="SSF101801">
    <property type="entry name" value="Surface presentation of antigens (SPOA)"/>
    <property type="match status" value="1"/>
</dbReference>
<accession>P0CG26</accession>
<accession>P34009</accession>
<keyword id="KW-0975">Bacterial flagellum</keyword>
<keyword id="KW-0997">Cell inner membrane</keyword>
<keyword id="KW-1003">Cell membrane</keyword>
<keyword id="KW-0145">Chemotaxis</keyword>
<keyword id="KW-0283">Flagellar rotation</keyword>
<keyword id="KW-0472">Membrane</keyword>
<keyword id="KW-1185">Reference proteome</keyword>
<gene>
    <name type="primary">fliM</name>
    <name type="synonym">flbO</name>
    <name type="ordered locus">CC_2061</name>
</gene>
<protein>
    <recommendedName>
        <fullName>Flagellar motor switch protein FliM</fullName>
    </recommendedName>
</protein>
<evidence type="ECO:0000250" key="1"/>
<evidence type="ECO:0000256" key="2">
    <source>
        <dbReference type="SAM" id="MobiDB-lite"/>
    </source>
</evidence>
<evidence type="ECO:0000305" key="3"/>
<feature type="chain" id="PRO_0000180927" description="Flagellar motor switch protein FliM">
    <location>
        <begin position="1"/>
        <end position="373"/>
    </location>
</feature>
<feature type="region of interest" description="Disordered" evidence="2">
    <location>
        <begin position="1"/>
        <end position="48"/>
    </location>
</feature>
<feature type="compositionally biased region" description="Gly residues" evidence="2">
    <location>
        <begin position="32"/>
        <end position="46"/>
    </location>
</feature>
<name>FLIM_CAUVC</name>
<organism>
    <name type="scientific">Caulobacter vibrioides (strain ATCC 19089 / CIP 103742 / CB 15)</name>
    <name type="common">Caulobacter crescentus</name>
    <dbReference type="NCBI Taxonomy" id="190650"/>
    <lineage>
        <taxon>Bacteria</taxon>
        <taxon>Pseudomonadati</taxon>
        <taxon>Pseudomonadota</taxon>
        <taxon>Alphaproteobacteria</taxon>
        <taxon>Caulobacterales</taxon>
        <taxon>Caulobacteraceae</taxon>
        <taxon>Caulobacter</taxon>
    </lineage>
</organism>
<sequence>MADELDDQAAMAQWASENPPGGGEGVNEFGDFSGGMGGWDDGGGDGASERILNQDEIDSLLGFDLSGDGSDDRTGIRAIINSALVSYERLPMLEIVFDRLVRLMTTSLRNFTSDNVEVSLDNISSIRFGDYLNSIPLPGILAVFRAEELDNYGLLTVDSNLIYSIVDVLLGGRRGTAAMRIEGRPYTTIERVLVQRMIDVVLHDLKSAFEPLHPVSFSLDRLETNPPFAAIARPANAAILVKLRIDMEDRGGRIELLLPYATLEPIRKMLLQQFMGEKFGRDNIWEGHLATELWTTQMEVRAVLDEQQVPLSRVLNMQVGDTLMLNATSRQPGGAARRRIPLTRGRMGRRNHSIAVRAEAPVDRRKKAVQKLK</sequence>
<proteinExistence type="uncertain"/>